<feature type="chain" id="PRO_0000197039" description="Uncharacterized protein 7">
    <location>
        <begin position="1"/>
        <end position="126"/>
    </location>
</feature>
<keyword id="KW-0192">Crown gall tumor</keyword>
<keyword id="KW-0614">Plasmid</keyword>
<proteinExistence type="predicted"/>
<sequence>MNFADTPLASLDLDWACEEFIKTYGASPQLETGEVIQTNNGLLYLYGKGSLSQRIHDTHLKFKEKEELSFTTIKPAEMKAQQSDLTYYVAIFQSNYFLCVSNPEKGFLRCHNRPFLYPIVAHGSMS</sequence>
<accession>P0A3J7</accession>
<accession>P03867</accession>
<name>YP7_RHIRD</name>
<dbReference type="EMBL" id="X00431">
    <property type="protein sequence ID" value="CAA25129.1"/>
    <property type="molecule type" value="Genomic_DNA"/>
</dbReference>
<dbReference type="EMBL" id="AF242881">
    <property type="protein sequence ID" value="AAF77121.1"/>
    <property type="molecule type" value="Genomic_DNA"/>
</dbReference>
<dbReference type="PIR" id="A93506">
    <property type="entry name" value="Q7AGOT"/>
</dbReference>
<dbReference type="RefSeq" id="NP_059674.1">
    <property type="nucleotide sequence ID" value="NC_002377.1"/>
</dbReference>
<dbReference type="RefSeq" id="WP_010892362.1">
    <property type="nucleotide sequence ID" value="NZ_KY000030.1"/>
</dbReference>
<organism>
    <name type="scientific">Rhizobium radiobacter</name>
    <name type="common">Agrobacterium tumefaciens</name>
    <name type="synonym">Agrobacterium radiobacter</name>
    <dbReference type="NCBI Taxonomy" id="358"/>
    <lineage>
        <taxon>Bacteria</taxon>
        <taxon>Pseudomonadati</taxon>
        <taxon>Pseudomonadota</taxon>
        <taxon>Alphaproteobacteria</taxon>
        <taxon>Hyphomicrobiales</taxon>
        <taxon>Rhizobiaceae</taxon>
        <taxon>Rhizobium/Agrobacterium group</taxon>
        <taxon>Agrobacterium</taxon>
        <taxon>Agrobacterium tumefaciens complex</taxon>
    </lineage>
</organism>
<protein>
    <recommendedName>
        <fullName>Uncharacterized protein 7</fullName>
    </recommendedName>
    <alternativeName>
        <fullName>Open reading frame 3</fullName>
    </alternativeName>
</protein>
<reference key="1">
    <citation type="journal article" date="1984" name="Nucleic Acids Res.">
        <title>DNA sequence analysis of crown gall tumor T-DNA encoding the 0.7 kb transcript.</title>
        <authorList>
            <person name="McPherson J.C."/>
        </authorList>
    </citation>
    <scope>NUCLEOTIDE SEQUENCE [GENOMIC DNA]</scope>
</reference>
<geneLocation type="plasmid">
    <name>pTiA6</name>
</geneLocation>